<feature type="chain" id="PRO_0000064919" description="Nuclear segregation protein BFR1">
    <location>
        <begin position="1"/>
        <end position="470"/>
    </location>
</feature>
<feature type="region of interest" description="Disordered" evidence="2">
    <location>
        <begin position="346"/>
        <end position="368"/>
    </location>
</feature>
<feature type="region of interest" description="Disordered" evidence="2">
    <location>
        <begin position="447"/>
        <end position="470"/>
    </location>
</feature>
<feature type="coiled-coil region" evidence="1">
    <location>
        <begin position="17"/>
        <end position="178"/>
    </location>
</feature>
<feature type="coiled-coil region" evidence="1">
    <location>
        <begin position="237"/>
        <end position="281"/>
    </location>
</feature>
<feature type="coiled-coil region" evidence="1">
    <location>
        <begin position="398"/>
        <end position="469"/>
    </location>
</feature>
<feature type="compositionally biased region" description="Basic residues" evidence="2">
    <location>
        <begin position="349"/>
        <end position="358"/>
    </location>
</feature>
<feature type="modified residue" description="Phosphoserine" evidence="5">
    <location>
        <position position="260"/>
    </location>
</feature>
<feature type="modified residue" description="Phosphothreonine" evidence="4 6 7 8">
    <location>
        <position position="336"/>
    </location>
</feature>
<feature type="modified residue" description="Phosphoserine" evidence="8">
    <location>
        <position position="369"/>
    </location>
</feature>
<evidence type="ECO:0000255" key="1"/>
<evidence type="ECO:0000256" key="2">
    <source>
        <dbReference type="SAM" id="MobiDB-lite"/>
    </source>
</evidence>
<evidence type="ECO:0000269" key="3">
    <source>
    </source>
</evidence>
<evidence type="ECO:0007744" key="4">
    <source>
    </source>
</evidence>
<evidence type="ECO:0007744" key="5">
    <source>
    </source>
</evidence>
<evidence type="ECO:0007744" key="6">
    <source>
    </source>
</evidence>
<evidence type="ECO:0007744" key="7">
    <source>
    </source>
</evidence>
<evidence type="ECO:0007744" key="8">
    <source>
    </source>
</evidence>
<proteinExistence type="evidence at protein level"/>
<reference key="1">
    <citation type="journal article" date="1994" name="Genetics">
        <title>BFR1, a multicopy suppressor of brefeldin A-induced lethality, is implicated in secretion and nuclear segregation in Saccharomyces cerevisiae.</title>
        <authorList>
            <person name="Jackson C.L."/>
            <person name="Kepes F."/>
        </authorList>
    </citation>
    <scope>NUCLEOTIDE SEQUENCE</scope>
    <source>
        <strain>ATCC 28383 / FL100 / VTT C-80102</strain>
    </source>
</reference>
<reference key="2">
    <citation type="journal article" date="1997" name="Nature">
        <title>The nucleotide sequence of Saccharomyces cerevisiae chromosome XV.</title>
        <authorList>
            <person name="Dujon B."/>
            <person name="Albermann K."/>
            <person name="Aldea M."/>
            <person name="Alexandraki D."/>
            <person name="Ansorge W."/>
            <person name="Arino J."/>
            <person name="Benes V."/>
            <person name="Bohn C."/>
            <person name="Bolotin-Fukuhara M."/>
            <person name="Bordonne R."/>
            <person name="Boyer J."/>
            <person name="Camasses A."/>
            <person name="Casamayor A."/>
            <person name="Casas C."/>
            <person name="Cheret G."/>
            <person name="Cziepluch C."/>
            <person name="Daignan-Fornier B."/>
            <person name="Dang V.-D."/>
            <person name="de Haan M."/>
            <person name="Delius H."/>
            <person name="Durand P."/>
            <person name="Fairhead C."/>
            <person name="Feldmann H."/>
            <person name="Gaillon L."/>
            <person name="Galisson F."/>
            <person name="Gamo F.-J."/>
            <person name="Gancedo C."/>
            <person name="Goffeau A."/>
            <person name="Goulding S.E."/>
            <person name="Grivell L.A."/>
            <person name="Habbig B."/>
            <person name="Hand N.J."/>
            <person name="Hani J."/>
            <person name="Hattenhorst U."/>
            <person name="Hebling U."/>
            <person name="Hernando Y."/>
            <person name="Herrero E."/>
            <person name="Heumann K."/>
            <person name="Hiesel R."/>
            <person name="Hilger F."/>
            <person name="Hofmann B."/>
            <person name="Hollenberg C.P."/>
            <person name="Hughes B."/>
            <person name="Jauniaux J.-C."/>
            <person name="Kalogeropoulos A."/>
            <person name="Katsoulou C."/>
            <person name="Kordes E."/>
            <person name="Lafuente M.J."/>
            <person name="Landt O."/>
            <person name="Louis E.J."/>
            <person name="Maarse A.C."/>
            <person name="Madania A."/>
            <person name="Mannhaupt G."/>
            <person name="Marck C."/>
            <person name="Martin R.P."/>
            <person name="Mewes H.-W."/>
            <person name="Michaux G."/>
            <person name="Paces V."/>
            <person name="Parle-McDermott A.G."/>
            <person name="Pearson B.M."/>
            <person name="Perrin A."/>
            <person name="Pettersson B."/>
            <person name="Poch O."/>
            <person name="Pohl T.M."/>
            <person name="Poirey R."/>
            <person name="Portetelle D."/>
            <person name="Pujol A."/>
            <person name="Purnelle B."/>
            <person name="Ramezani Rad M."/>
            <person name="Rechmann S."/>
            <person name="Schwager C."/>
            <person name="Schweizer M."/>
            <person name="Sor F."/>
            <person name="Sterky F."/>
            <person name="Tarassov I.A."/>
            <person name="Teodoru C."/>
            <person name="Tettelin H."/>
            <person name="Thierry A."/>
            <person name="Tobiasch E."/>
            <person name="Tzermia M."/>
            <person name="Uhlen M."/>
            <person name="Unseld M."/>
            <person name="Valens M."/>
            <person name="Vandenbol M."/>
            <person name="Vetter I."/>
            <person name="Vlcek C."/>
            <person name="Voet M."/>
            <person name="Volckaert G."/>
            <person name="Voss H."/>
            <person name="Wambutt R."/>
            <person name="Wedler H."/>
            <person name="Wiemann S."/>
            <person name="Winsor B."/>
            <person name="Wolfe K.H."/>
            <person name="Zollner A."/>
            <person name="Zumstein E."/>
            <person name="Kleine K."/>
        </authorList>
    </citation>
    <scope>NUCLEOTIDE SEQUENCE [LARGE SCALE GENOMIC DNA]</scope>
    <source>
        <strain>ATCC 204508 / S288c</strain>
    </source>
</reference>
<reference key="3">
    <citation type="journal article" date="2014" name="G3 (Bethesda)">
        <title>The reference genome sequence of Saccharomyces cerevisiae: Then and now.</title>
        <authorList>
            <person name="Engel S.R."/>
            <person name="Dietrich F.S."/>
            <person name="Fisk D.G."/>
            <person name="Binkley G."/>
            <person name="Balakrishnan R."/>
            <person name="Costanzo M.C."/>
            <person name="Dwight S.S."/>
            <person name="Hitz B.C."/>
            <person name="Karra K."/>
            <person name="Nash R.S."/>
            <person name="Weng S."/>
            <person name="Wong E.D."/>
            <person name="Lloyd P."/>
            <person name="Skrzypek M.S."/>
            <person name="Miyasato S.R."/>
            <person name="Simison M."/>
            <person name="Cherry J.M."/>
        </authorList>
    </citation>
    <scope>GENOME REANNOTATION</scope>
    <source>
        <strain>ATCC 204508 / S288c</strain>
    </source>
</reference>
<reference key="4">
    <citation type="journal article" date="2003" name="Nature">
        <title>Global analysis of protein expression in yeast.</title>
        <authorList>
            <person name="Ghaemmaghami S."/>
            <person name="Huh W.-K."/>
            <person name="Bower K."/>
            <person name="Howson R.W."/>
            <person name="Belle A."/>
            <person name="Dephoure N."/>
            <person name="O'Shea E.K."/>
            <person name="Weissman J.S."/>
        </authorList>
    </citation>
    <scope>LEVEL OF PROTEIN EXPRESSION [LARGE SCALE ANALYSIS]</scope>
</reference>
<reference key="5">
    <citation type="journal article" date="2005" name="Mol. Cell. Proteomics">
        <title>Quantitative phosphoproteomics applied to the yeast pheromone signaling pathway.</title>
        <authorList>
            <person name="Gruhler A."/>
            <person name="Olsen J.V."/>
            <person name="Mohammed S."/>
            <person name="Mortensen P."/>
            <person name="Faergeman N.J."/>
            <person name="Mann M."/>
            <person name="Jensen O.N."/>
        </authorList>
    </citation>
    <scope>PHOSPHORYLATION [LARGE SCALE ANALYSIS] AT THR-336</scope>
    <scope>IDENTIFICATION BY MASS SPECTROMETRY [LARGE SCALE ANALYSIS]</scope>
    <source>
        <strain>YAL6B</strain>
    </source>
</reference>
<reference key="6">
    <citation type="journal article" date="2007" name="J. Proteome Res.">
        <title>Large-scale phosphorylation analysis of alpha-factor-arrested Saccharomyces cerevisiae.</title>
        <authorList>
            <person name="Li X."/>
            <person name="Gerber S.A."/>
            <person name="Rudner A.D."/>
            <person name="Beausoleil S.A."/>
            <person name="Haas W."/>
            <person name="Villen J."/>
            <person name="Elias J.E."/>
            <person name="Gygi S.P."/>
        </authorList>
    </citation>
    <scope>PHOSPHORYLATION [LARGE SCALE ANALYSIS] AT THR-336</scope>
    <scope>IDENTIFICATION BY MASS SPECTROMETRY [LARGE SCALE ANALYSIS]</scope>
    <source>
        <strain>ADR376</strain>
    </source>
</reference>
<reference key="7">
    <citation type="journal article" date="2007" name="Proc. Natl. Acad. Sci. U.S.A.">
        <title>Analysis of phosphorylation sites on proteins from Saccharomyces cerevisiae by electron transfer dissociation (ETD) mass spectrometry.</title>
        <authorList>
            <person name="Chi A."/>
            <person name="Huttenhower C."/>
            <person name="Geer L.Y."/>
            <person name="Coon J.J."/>
            <person name="Syka J.E.P."/>
            <person name="Bai D.L."/>
            <person name="Shabanowitz J."/>
            <person name="Burke D.J."/>
            <person name="Troyanskaya O.G."/>
            <person name="Hunt D.F."/>
        </authorList>
    </citation>
    <scope>PHOSPHORYLATION [LARGE SCALE ANALYSIS] AT SER-260</scope>
    <scope>IDENTIFICATION BY MASS SPECTROMETRY [LARGE SCALE ANALYSIS]</scope>
</reference>
<reference key="8">
    <citation type="journal article" date="2008" name="Mol. Cell. Proteomics">
        <title>A multidimensional chromatography technology for in-depth phosphoproteome analysis.</title>
        <authorList>
            <person name="Albuquerque C.P."/>
            <person name="Smolka M.B."/>
            <person name="Payne S.H."/>
            <person name="Bafna V."/>
            <person name="Eng J."/>
            <person name="Zhou H."/>
        </authorList>
    </citation>
    <scope>PHOSPHORYLATION [LARGE SCALE ANALYSIS] AT THR-336</scope>
    <scope>IDENTIFICATION BY MASS SPECTROMETRY [LARGE SCALE ANALYSIS]</scope>
</reference>
<reference key="9">
    <citation type="journal article" date="2009" name="Science">
        <title>Global analysis of Cdk1 substrate phosphorylation sites provides insights into evolution.</title>
        <authorList>
            <person name="Holt L.J."/>
            <person name="Tuch B.B."/>
            <person name="Villen J."/>
            <person name="Johnson A.D."/>
            <person name="Gygi S.P."/>
            <person name="Morgan D.O."/>
        </authorList>
    </citation>
    <scope>PHOSPHORYLATION [LARGE SCALE ANALYSIS] AT THR-336 AND SER-369</scope>
    <scope>IDENTIFICATION BY MASS SPECTROMETRY [LARGE SCALE ANALYSIS]</scope>
</reference>
<organism>
    <name type="scientific">Saccharomyces cerevisiae (strain ATCC 204508 / S288c)</name>
    <name type="common">Baker's yeast</name>
    <dbReference type="NCBI Taxonomy" id="559292"/>
    <lineage>
        <taxon>Eukaryota</taxon>
        <taxon>Fungi</taxon>
        <taxon>Dikarya</taxon>
        <taxon>Ascomycota</taxon>
        <taxon>Saccharomycotina</taxon>
        <taxon>Saccharomycetes</taxon>
        <taxon>Saccharomycetales</taxon>
        <taxon>Saccharomycetaceae</taxon>
        <taxon>Saccharomyces</taxon>
    </lineage>
</organism>
<name>BFR1_YEAST</name>
<comment type="function">
    <text>Implicated in secretion, nuclear segregation and in maintenance of cell size.</text>
</comment>
<comment type="domain">
    <text>Three regions of the protein are predicted to form a coiled-coil. It may adopt a rod-shaped rather than a globular configuration.</text>
</comment>
<comment type="miscellaneous">
    <text evidence="3">Present with 33400 molecules/cell in log phase SD medium.</text>
</comment>
<gene>
    <name type="primary">BFR1</name>
    <name type="ordered locus">YOR198C</name>
</gene>
<protein>
    <recommendedName>
        <fullName>Nuclear segregation protein BFR1</fullName>
    </recommendedName>
    <alternativeName>
        <fullName>Brefeldin A resistance protein 1</fullName>
    </alternativeName>
</protein>
<sequence length="470" mass="54639">MSSQQHKFKRPDVSVRDKKLDTLNVQLKKIDTEIGLIRKQIDQHQVNDTTQQERKKLQDKNKEIIKIQADLKTRRSNIHDSIKQLDAQIKRKNNQIEEKLGKKAKFSSTAEAKQRINEIEESIASGDLSLVQEKLLVKEMQSLNKLIKDLVNIEPIRKSVDADKAKINQLKEELNGLNPKDVSNQFEENQQKLNDIHSKTQGVYDKRQTLFNKRAALYKKRDELYSQIRQIRADFDNEFKSFRAKLDKERLKREEEQRLSKLLEQKDVDMGKLQEKLTHAKIPAFTYEIGAIENSLLVLDPTYVKPKKNILPDLSSNALETKPARKVVADDLVLVTPKKDDFVNVAPSKSKKYKKKNQQKNTENEQPASIFNKVDGKFTLEPTLIATLAELDVTVPINSDDVKITVEQLKKKHEELLSKQEEQTKQNIESVEKEIEKLNLDYSNKEQQVKKELEEKRLKEQEESEKDKEN</sequence>
<dbReference type="EMBL" id="U06870">
    <property type="protein sequence ID" value="AAA19589.1"/>
    <property type="molecule type" value="Unassigned_DNA"/>
</dbReference>
<dbReference type="EMBL" id="Z75106">
    <property type="protein sequence ID" value="CAA99411.1"/>
    <property type="molecule type" value="Genomic_DNA"/>
</dbReference>
<dbReference type="EMBL" id="BK006948">
    <property type="protein sequence ID" value="DAA10973.1"/>
    <property type="molecule type" value="Genomic_DNA"/>
</dbReference>
<dbReference type="PIR" id="S47887">
    <property type="entry name" value="S47887"/>
</dbReference>
<dbReference type="RefSeq" id="NP_014841.1">
    <property type="nucleotide sequence ID" value="NM_001183617.1"/>
</dbReference>
<dbReference type="SMR" id="P38934"/>
<dbReference type="BioGRID" id="34596">
    <property type="interactions" value="1391"/>
</dbReference>
<dbReference type="DIP" id="DIP-4128N"/>
<dbReference type="FunCoup" id="P38934">
    <property type="interactions" value="263"/>
</dbReference>
<dbReference type="IntAct" id="P38934">
    <property type="interactions" value="73"/>
</dbReference>
<dbReference type="MINT" id="P38934"/>
<dbReference type="STRING" id="4932.YOR198C"/>
<dbReference type="CarbonylDB" id="P38934"/>
<dbReference type="iPTMnet" id="P38934"/>
<dbReference type="PaxDb" id="4932-YOR198C"/>
<dbReference type="PeptideAtlas" id="P38934"/>
<dbReference type="EnsemblFungi" id="YOR198C_mRNA">
    <property type="protein sequence ID" value="YOR198C"/>
    <property type="gene ID" value="YOR198C"/>
</dbReference>
<dbReference type="GeneID" id="854373"/>
<dbReference type="KEGG" id="sce:YOR198C"/>
<dbReference type="AGR" id="SGD:S000005724"/>
<dbReference type="SGD" id="S000005724">
    <property type="gene designation" value="BFR1"/>
</dbReference>
<dbReference type="VEuPathDB" id="FungiDB:YOR198C"/>
<dbReference type="eggNOG" id="ENOG502QRKP">
    <property type="taxonomic scope" value="Eukaryota"/>
</dbReference>
<dbReference type="HOGENOM" id="CLU_023943_2_0_1"/>
<dbReference type="InParanoid" id="P38934"/>
<dbReference type="OMA" id="AHWKEDQ"/>
<dbReference type="OrthoDB" id="2195113at2759"/>
<dbReference type="BioCyc" id="YEAST:G3O-33706-MONOMER"/>
<dbReference type="BioGRID-ORCS" id="854373">
    <property type="hits" value="0 hits in 10 CRISPR screens"/>
</dbReference>
<dbReference type="CD-CODE" id="A777E0F8">
    <property type="entry name" value="P-body"/>
</dbReference>
<dbReference type="CD-CODE" id="E03F929F">
    <property type="entry name" value="Stress granule"/>
</dbReference>
<dbReference type="ChiTaRS" id="BFR1">
    <property type="organism name" value="yeast"/>
</dbReference>
<dbReference type="PRO" id="PR:P38934"/>
<dbReference type="Proteomes" id="UP000002311">
    <property type="component" value="Chromosome XV"/>
</dbReference>
<dbReference type="RNAct" id="P38934">
    <property type="molecule type" value="protein"/>
</dbReference>
<dbReference type="GO" id="GO:0005737">
    <property type="term" value="C:cytoplasm"/>
    <property type="evidence" value="ECO:0000314"/>
    <property type="project" value="SGD"/>
</dbReference>
<dbReference type="GO" id="GO:0005783">
    <property type="term" value="C:endoplasmic reticulum"/>
    <property type="evidence" value="ECO:0000314"/>
    <property type="project" value="SGD"/>
</dbReference>
<dbReference type="GO" id="GO:0042175">
    <property type="term" value="C:nuclear outer membrane-endoplasmic reticulum membrane network"/>
    <property type="evidence" value="ECO:0000314"/>
    <property type="project" value="SGD"/>
</dbReference>
<dbReference type="GO" id="GO:1990904">
    <property type="term" value="C:ribonucleoprotein complex"/>
    <property type="evidence" value="ECO:0000314"/>
    <property type="project" value="SGD"/>
</dbReference>
<dbReference type="GO" id="GO:0003729">
    <property type="term" value="F:mRNA binding"/>
    <property type="evidence" value="ECO:0000315"/>
    <property type="project" value="SGD"/>
</dbReference>
<dbReference type="GO" id="GO:0003723">
    <property type="term" value="F:RNA binding"/>
    <property type="evidence" value="ECO:0000314"/>
    <property type="project" value="SGD"/>
</dbReference>
<dbReference type="GO" id="GO:0042149">
    <property type="term" value="P:cellular response to glucose starvation"/>
    <property type="evidence" value="ECO:0000315"/>
    <property type="project" value="SGD"/>
</dbReference>
<dbReference type="GO" id="GO:0008298">
    <property type="term" value="P:intracellular mRNA localization"/>
    <property type="evidence" value="ECO:0000315"/>
    <property type="project" value="SGD"/>
</dbReference>
<dbReference type="GO" id="GO:0051321">
    <property type="term" value="P:meiotic cell cycle"/>
    <property type="evidence" value="ECO:0000315"/>
    <property type="project" value="SGD"/>
</dbReference>
<dbReference type="GO" id="GO:0045048">
    <property type="term" value="P:protein insertion into ER membrane"/>
    <property type="evidence" value="ECO:0000315"/>
    <property type="project" value="SGD"/>
</dbReference>
<dbReference type="GO" id="GO:0035269">
    <property type="term" value="P:protein O-linked mannosylation"/>
    <property type="evidence" value="ECO:0000315"/>
    <property type="project" value="SGD"/>
</dbReference>
<dbReference type="GO" id="GO:0007088">
    <property type="term" value="P:regulation of mitotic nuclear division"/>
    <property type="evidence" value="ECO:0000315"/>
    <property type="project" value="SGD"/>
</dbReference>
<dbReference type="InterPro" id="IPR039604">
    <property type="entry name" value="Bfr1"/>
</dbReference>
<dbReference type="PANTHER" id="PTHR31027:SF2">
    <property type="entry name" value="LEBERCILIN DOMAIN-CONTAINING PROTEIN"/>
    <property type="match status" value="1"/>
</dbReference>
<dbReference type="PANTHER" id="PTHR31027">
    <property type="entry name" value="NUCLEAR SEGREGATION PROTEIN BFR1"/>
    <property type="match status" value="1"/>
</dbReference>
<keyword id="KW-0175">Coiled coil</keyword>
<keyword id="KW-0597">Phosphoprotein</keyword>
<keyword id="KW-1185">Reference proteome</keyword>
<accession>P38934</accession>
<accession>D6W2Q7</accession>